<gene>
    <name type="primary">Ngfr</name>
    <name type="synonym">Tnfrsf16</name>
</gene>
<sequence length="425" mass="45433">MRRAGAACSAMDRLRLLLLLILGVSSGGAKETCSTGLYTHSGECCKACNLGEGVAQPCGANQTVCEPCLDNVTFSDVVSATEPCKPCTECLGLQSMSAPCVEADDAVCRCAYGYYQDEETGHCEACSVCEVGSGLVFSCQDKQNTVCEECPEGTYSDEANHVDPCLPCTVCEDTERQLRECTPWADAECEEIPGRWIPRSTPPEGSDSTAPSTQEPEVPPEQDLVPSTVADMVTTVMGSSQPVVTRGTTDNLIPVYCSILAAVVVGLVAYIAFKRWNSCKQNKQGANSRPVNQTPPPEGEKLHSDSGISVDSQSLHDQQTHTQTASGQALKGDGNLYSSLPLTKREEVEKLLNGDTWRHLAGELGYQPEHIDSFTHEACPVRALLASWGAQDSATLDALLAALRRIQRADIVESLCSESTATSPV</sequence>
<proteinExistence type="evidence at protein level"/>
<protein>
    <recommendedName>
        <fullName>Tumor necrosis factor receptor superfamily member 16</fullName>
    </recommendedName>
    <alternativeName>
        <fullName>Gp80-LNGFR</fullName>
    </alternativeName>
    <alternativeName>
        <fullName>Low affinity neurotrophin receptor p75NTR</fullName>
    </alternativeName>
    <alternativeName>
        <fullName>Low-affinity nerve growth factor receptor</fullName>
        <shortName>NGF receptor</shortName>
    </alternativeName>
    <alternativeName>
        <fullName>Low-affinity nerve growth factor receptor p75NGFR</fullName>
    </alternativeName>
    <alternativeName>
        <fullName>Low-affinity nerve growth factor receptor p75NGR</fullName>
    </alternativeName>
    <alternativeName>
        <fullName>p75 ICD</fullName>
    </alternativeName>
    <cdAntigenName>CD271</cdAntigenName>
</protein>
<reference key="1">
    <citation type="journal article" date="1987" name="Nature">
        <title>Gene transfer and molecular cloning of the rat nerve growth factor receptor.</title>
        <authorList>
            <person name="Radeke M.J."/>
            <person name="Misko T.P."/>
            <person name="Hsu C."/>
            <person name="Herzenberg L.A."/>
            <person name="Shooter E.M."/>
        </authorList>
    </citation>
    <scope>NUCLEOTIDE SEQUENCE [MRNA]</scope>
    <scope>FUNCTION</scope>
    <scope>SUBCELLULAR LOCATION</scope>
</reference>
<reference key="2">
    <citation type="journal article" date="1992" name="Gene">
        <title>Regulatory elements and transcriptional regulation by testosterone and retinoic acid of the rat nerve growth factor receptor promoter.</title>
        <authorList>
            <person name="Metsis M."/>
            <person name="Timmusk T."/>
            <person name="Allikmets R."/>
            <person name="Saarma M."/>
            <person name="Persson H."/>
        </authorList>
    </citation>
    <scope>NUCLEOTIDE SEQUENCE [GENOMIC DNA] OF 1-22</scope>
    <source>
        <tissue>Liver</tissue>
    </source>
</reference>
<reference key="3">
    <citation type="journal article" date="1999" name="EMBO J.">
        <title>Biochemical and functional interactions between the neurotrophin receptors trk and p75NTR.</title>
        <authorList>
            <person name="Bibel M."/>
            <person name="Hoppe E."/>
            <person name="Barde Y.A."/>
        </authorList>
    </citation>
    <scope>INTERACTION WITH NTRK2</scope>
</reference>
<reference key="4">
    <citation type="journal article" date="1999" name="J. Biol. Chem.">
        <title>TRAF family proteins interact with the common neurotrophin receptor and modulate apoptosis induction.</title>
        <authorList>
            <person name="Ye X."/>
            <person name="Mehlen P."/>
            <person name="Rabizadeh S."/>
            <person name="VanArsdale T."/>
            <person name="Zhang H."/>
            <person name="Shin H."/>
            <person name="Wang J.J.L."/>
            <person name="Leo E."/>
            <person name="Zapata J.M."/>
            <person name="Hauser C.A."/>
            <person name="Reed J.C."/>
            <person name="Bredesen D.E."/>
        </authorList>
    </citation>
    <scope>FUNCTION</scope>
    <scope>INTERACTION WITH TRAF2; TRAF4 AND TRAF6</scope>
</reference>
<reference key="5">
    <citation type="journal article" date="2000" name="Neuron">
        <title>NRAGE, a novel MAGE protein, interacts with the p75 neurotrophin receptor and facilitates nerve growth factor dependent apoptosis.</title>
        <authorList>
            <person name="Salehi A.H."/>
            <person name="Roux P.P."/>
            <person name="Kubu C.J."/>
            <person name="Zeindler C."/>
            <person name="Bhakar A."/>
            <person name="Tannis L.-L."/>
            <person name="Verdi J.M."/>
            <person name="Barker P.A."/>
        </authorList>
    </citation>
    <scope>FUNCTION IN APOPTOSIS</scope>
    <scope>INTERACTION WITH MAGED1</scope>
    <source>
        <strain>Sprague-Dawley</strain>
        <tissue>Neural crest</tissue>
    </source>
</reference>
<reference key="6">
    <citation type="journal article" date="2001" name="J. Neurosci.">
        <title>An evolutionarily conserved transmembrane protein that is a novel downstream target of neurotrophin and ephrin receptors.</title>
        <authorList>
            <person name="Kong H."/>
            <person name="Boulter J."/>
            <person name="Weber J.L."/>
            <person name="Lai C."/>
            <person name="Chao M.V."/>
        </authorList>
    </citation>
    <scope>INTERACTION WITH KIDINS220</scope>
</reference>
<reference key="7">
    <citation type="journal article" date="2002" name="NeuroMolecular Med.">
        <title>PLAIDD, a type II death domain protein that interacts with p75 neurotrophin receptor.</title>
        <authorList>
            <person name="Frankowski H."/>
            <person name="Castro-Obregon S."/>
            <person name="del Rio G."/>
            <person name="Rao R.V."/>
            <person name="Bredesen D.E."/>
        </authorList>
    </citation>
    <scope>INTERACTION WITH NRADD</scope>
</reference>
<reference key="8">
    <citation type="journal article" date="2004" name="J. Neurosci. Res.">
        <title>Ternary complex with Trk, p75, and an ankyrin-rich membrane spanning protein.</title>
        <authorList>
            <person name="Chang M.-S."/>
            <person name="Arevalo J.C."/>
            <person name="Chao M.V."/>
        </authorList>
    </citation>
    <scope>INTERACTION WITH NTRK1 AND KIDINS220</scope>
    <scope>DOMAIN</scope>
</reference>
<reference key="9">
    <citation type="journal article" date="2006" name="EMBO J.">
        <title>Bex1, a novel interactor of the p75 neurotrophin receptor, links neurotrophin signaling to the cell cycle.</title>
        <authorList>
            <person name="Vilar M."/>
            <person name="Murillo-Carretero M."/>
            <person name="Mira H."/>
            <person name="Magnusson K."/>
            <person name="Besset V."/>
            <person name="Ibanez C.F."/>
        </authorList>
    </citation>
    <scope>INTERACTION WITH BEX1</scope>
</reference>
<reference key="10">
    <citation type="journal article" date="2011" name="Sci. Signal.">
        <title>Neuronal growth cone retraction relies on proneurotrophin receptor signaling through Rac.</title>
        <authorList>
            <person name="Deinhardt K."/>
            <person name="Kim T."/>
            <person name="Spellman D.S."/>
            <person name="Mains R.E."/>
            <person name="Eipper B.A."/>
            <person name="Neubert T.A."/>
            <person name="Chao M.V."/>
            <person name="Hempstead B.L."/>
        </authorList>
    </citation>
    <scope>FUNCTION</scope>
    <scope>INTERACTION WITH TRIO; SORCS2 AND NGF</scope>
    <scope>SUBUNIT</scope>
    <scope>SUBCELLULAR LOCATION</scope>
</reference>
<reference key="11">
    <citation type="journal article" date="2014" name="Neuron">
        <title>SorCS2 regulates dopaminergic wiring and is processed into an apoptotic two-chain receptor in peripheral glia.</title>
        <authorList>
            <person name="Glerup S."/>
            <person name="Olsen D."/>
            <person name="Vaegter C.B."/>
            <person name="Gustafsen C."/>
            <person name="Sjoegaard S.S."/>
            <person name="Hermey G."/>
            <person name="Kjolby M."/>
            <person name="Molgaard S."/>
            <person name="Ulrichsen M."/>
            <person name="Boggild S."/>
            <person name="Skeldal S."/>
            <person name="Fjorback A.N."/>
            <person name="Nyengaard J.R."/>
            <person name="Jacobsen J."/>
            <person name="Bender D."/>
            <person name="Bjarkam C.R."/>
            <person name="Soerensen E.S."/>
            <person name="Fuechtbauer E.M."/>
            <person name="Eichele G."/>
            <person name="Madsen P."/>
            <person name="Willnow T.E."/>
            <person name="Petersen C.M."/>
            <person name="Nykjaer A."/>
        </authorList>
    </citation>
    <scope>INTERACTION WITH SORCS2</scope>
    <scope>FUNCTION</scope>
    <scope>SUBCELLULAR LOCATION</scope>
</reference>
<reference key="12">
    <citation type="journal article" date="2016" name="Mol. Psychiatry">
        <title>SorCS2 is required for BDNF-dependent plasticity in the hippocampus.</title>
        <authorList>
            <person name="Glerup S."/>
            <person name="Bolcho U."/>
            <person name="Moelgaard S."/>
            <person name="Boeggild S."/>
            <person name="Vaegter C.B."/>
            <person name="Smith A.H."/>
            <person name="Nieto-Gonzalez J.L."/>
            <person name="Ovesen P.L."/>
            <person name="Pedersen L.F."/>
            <person name="Fjorback A.N."/>
            <person name="Kjolby M."/>
            <person name="Login H."/>
            <person name="Holm M.M."/>
            <person name="Andersen O.M."/>
            <person name="Nyengaard J.R."/>
            <person name="Willnow T.E."/>
            <person name="Jensen K."/>
            <person name="Nykjaer A."/>
        </authorList>
    </citation>
    <scope>INTERACTION WITH SORCS2</scope>
</reference>
<reference evidence="25" key="13">
    <citation type="journal article" date="1997" name="EMBO J.">
        <title>NMR structure of the death domain of the p75 neurotrophin receptor.</title>
        <authorList>
            <person name="Liepinsh E."/>
            <person name="Ilag L.L."/>
            <person name="Otting G."/>
            <person name="Ibanez C.F."/>
        </authorList>
    </citation>
    <scope>STRUCTURE BY NMR OF 334-418</scope>
</reference>
<reference evidence="26" key="14">
    <citation type="journal article" date="2004" name="Science">
        <title>Structure of nerve growth factor complexed with the shared neurotrophin receptor p75.</title>
        <authorList>
            <person name="He X.L."/>
            <person name="Garcia K.C."/>
        </authorList>
    </citation>
    <scope>X-RAY CRYSTALLOGRAPHY (2.40 ANGSTROMS) OF 30-190 IN COMPLEX WITH NGF</scope>
    <scope>FUNCTION</scope>
    <scope>DISULFIDE BONDS</scope>
</reference>
<reference evidence="29" key="15">
    <citation type="journal article" date="2008" name="Nature">
        <title>Crystal structure of the neurotrophin-3 and p75NTR symmetrical complex.</title>
        <authorList>
            <person name="Gong Y."/>
            <person name="Cao P."/>
            <person name="Yu H.J."/>
            <person name="Jiang T."/>
        </authorList>
    </citation>
    <scope>X-RAY CRYSTALLOGRAPHY (2.60 ANGSTROMS) OF 30-190 IN COMPLEX WITH NTF3</scope>
    <scope>FUNCTION</scope>
    <scope>GLYCOSYLATION AT ASN-61</scope>
    <scope>DISULFIDE BONDS</scope>
</reference>
<reference evidence="30" key="16">
    <citation type="journal article" date="2010" name="J. Mol. Biol.">
        <title>Molecular and structural insight into proNGF engagement of p75NTR and sortilin.</title>
        <authorList>
            <person name="Feng D."/>
            <person name="Kim T."/>
            <person name="Ozkan E."/>
            <person name="Light M."/>
            <person name="Torkin R."/>
            <person name="Teng K.K."/>
            <person name="Hempstead B.L."/>
            <person name="Garcia K.C."/>
        </authorList>
    </citation>
    <scope>X-RAY CRYSTALLOGRAPHY (3.75 ANGSTROMS) OF 30-190 OF MUTANT ASP-61 IN COMPLEX WITH NGF</scope>
    <scope>FUNCTION</scope>
    <scope>SUBCELLULAR LOCATION</scope>
    <scope>DISULFIDE BONDS</scope>
    <scope>GLYCOSYLATION AT ASN-61</scope>
    <scope>MUTAGENESIS OF ASN-61</scope>
</reference>
<reference evidence="27 28" key="17">
    <citation type="journal article" date="2016" name="J. Biol. Chem.">
        <title>Structural Basis of p75 Transmembrane Domain Dimerization.</title>
        <authorList>
            <person name="Nadezhdin K.D."/>
            <person name="Garcia-Carpio I."/>
            <person name="Goncharuk S.A."/>
            <person name="Mineev K.S."/>
            <person name="Arseniev A.S."/>
            <person name="Vilar M."/>
        </authorList>
    </citation>
    <scope>STRUCTURE BY NMR OF 244-284</scope>
    <scope>SUBUNIT</scope>
    <scope>PROTEOLYTIC CLEAVAGE</scope>
    <scope>MUTAGENESIS OF CYS-257; ALA-262 AND GLY-266</scope>
</reference>
<comment type="function">
    <text evidence="1 2 7 8 11 14 16 17 20">Low affinity receptor which can bind to NGF, BDNF, NTF3, and NTF4 (PubMed:15131306, PubMed:18596692, PubMed:3027580). Forms a heterodimeric receptor with SORCS2 that binds the precursor forms of NGF, BDNF and NTF3 with high affinity, and has much lower affinity for mature NGF and BDNF (PubMed:22155786, PubMed:24908487). In response to proNGF binding, the heterodimeric receptor with SORCS2 activates a signaling cascade that leads to decreased Rac activity, reorganization of the actin cytoskeleton and neuronal growth cone collapse (PubMed:22155786). Plays an important role in differentiation and survival of specific neuronal populations during development (By similarity). Can mediate cell survival as well as cell death of neural cells (PubMed:10514511, PubMed:10985348, PubMed:24908487). Plays a role in the inactivation of RHOA (By similarity). Plays a role in the regulation of the translocation of GLUT4 to the cell surface in adipocytes and skeletal muscle cells in response to insulin, probably by regulating RAB31 activity, and thereby contributes to the regulation of insulin-dependent glucose uptake (By similarity). Necessary for the circadian oscillation of the clock genes BMAL1, PER1, PER2 and NR1D1 in the suprachiasmatic nucleus (SCN) of the brain and in liver and of the genes involved in glucose and lipid metabolism in the liver (By similarity).</text>
</comment>
<comment type="subunit">
    <text evidence="1 2 7 8 9 10 12 13 16 17 18 19 21">Homodimer; disulfide-linked (PubMed:27056327). Heterodimer with SORCS2 (PubMed:22155786, PubMed:24908487, PubMed:27457814). The extracellular domains of the heterodimer bind NGF (PubMed:22155786, PubMed:24908487). The cytoplasmic region of the heterodimer binds TRIO. NGF binding mediates dissociation of TRIO from the receptor complex (PubMed:22155786). Interacts with RTN4R (By similarity). Interacts with TRAF2, TRAF4 and TRAF6 (PubMed:10514511). Interacts with PTPN13 and RANBP9. Interacts through TRAF6 with SQSTM1 which bridges NGFR to NTRK1 (By similarity). Interacts with BEX1 (PubMed:16498402). Interacts with BEX3 (By similarity). Interacts with KIDINS220 and NTRK1. Can form a ternary complex with NTRK1 and KIDINS220 and this complex is affected by the expression levels of KIDINS220. An increase in KIDINS220 expression leads to a decreased association of NGFR and NTRK1 (PubMed:11150334, PubMed:15378608). Interacts (via death domain) with RAB31 (By similarity). Interacts with NTRK2; may regulate the ligand specificity of the NTRK2 receptor (PubMed:9927421). Interacts with LINGO1 (By similarity). Interacts with NRADD (PubMed:12095158). Interacts with MAGED1; the interaction antagonizes the association NGFR:NTRK1 (PubMed:10985348). Interacts (via death domain) with ARHGDIA and RIPK2 (By similarity). Interacts with BFAR (By similarity).</text>
</comment>
<comment type="interaction">
    <interactant intactId="EBI-1038810">
        <id>P07174</id>
    </interactant>
    <interactant intactId="EBI-8089575">
        <id>Q3MKQ2</id>
        <label>Bex1</label>
    </interactant>
    <organismsDiffer>false</organismsDiffer>
    <experiments>4</experiments>
</comment>
<comment type="interaction">
    <interactant intactId="EBI-1038810">
        <id>P07174</id>
    </interactant>
    <interactant intactId="EBI-1038810">
        <id>P07174</id>
        <label>Ngfr</label>
    </interactant>
    <organismsDiffer>false</organismsDiffer>
    <experiments>2</experiments>
</comment>
<comment type="interaction">
    <interactant intactId="EBI-1038810">
        <id>P07174</id>
    </interactant>
    <interactant intactId="EBI-976667">
        <id>P35739</id>
        <label>Ntrk1</label>
    </interactant>
    <organismsDiffer>false</organismsDiffer>
    <experiments>2</experiments>
</comment>
<comment type="interaction">
    <interactant intactId="EBI-1038810">
        <id>P07174</id>
    </interactant>
    <interactant intactId="EBI-2431589">
        <id>PRO_0000000093</id>
        <label>APP</label>
        <dbReference type="UniProtKB" id="P05067"/>
    </interactant>
    <organismsDiffer>true</organismsDiffer>
    <experiments>2</experiments>
</comment>
<comment type="interaction">
    <interactant intactId="EBI-1038810">
        <id>P07174</id>
    </interactant>
    <interactant intactId="EBI-1028250">
        <id>P01138</id>
        <label>NGF</label>
    </interactant>
    <organismsDiffer>true</organismsDiffer>
    <experiments>3</experiments>
</comment>
<comment type="interaction">
    <interactant intactId="EBI-1038810">
        <id>P07174</id>
    </interactant>
    <interactant intactId="EBI-1025994">
        <id>P20783</id>
        <label>NTF3</label>
    </interactant>
    <organismsDiffer>true</organismsDiffer>
    <experiments>4</experiments>
</comment>
<comment type="interaction">
    <interactant intactId="EBI-1038810">
        <id>P07174</id>
    </interactant>
    <interactant intactId="EBI-355744">
        <id>Q12933</id>
        <label>TRAF2</label>
    </interactant>
    <organismsDiffer>true</organismsDiffer>
    <experiments>3</experiments>
</comment>
<comment type="interaction">
    <interactant intactId="EBI-1038810">
        <id>P07174</id>
    </interactant>
    <interactant intactId="EBI-3650647">
        <id>Q9BUZ4</id>
        <label>TRAF4</label>
    </interactant>
    <organismsDiffer>true</organismsDiffer>
    <experiments>3</experiments>
</comment>
<comment type="interaction">
    <interactant intactId="EBI-1038810">
        <id>P07174</id>
    </interactant>
    <interactant intactId="EBI-359276">
        <id>Q9Y4K3</id>
        <label>TRAF6</label>
    </interactant>
    <organismsDiffer>true</organismsDiffer>
    <experiments>2</experiments>
</comment>
<comment type="subcellular location">
    <subcellularLocation>
        <location evidence="15 16 17 20">Cell membrane</location>
        <topology evidence="22">Single-pass type I membrane protein</topology>
    </subcellularLocation>
    <subcellularLocation>
        <location evidence="1">Cytoplasm</location>
    </subcellularLocation>
    <subcellularLocation>
        <location evidence="16">Perikaryon</location>
    </subcellularLocation>
    <subcellularLocation>
        <location evidence="16">Cell projection</location>
        <location evidence="16">Growth cone</location>
    </subcellularLocation>
    <subcellularLocation>
        <location evidence="2">Cell projection</location>
        <location evidence="2">Dendritic spine</location>
    </subcellularLocation>
</comment>
<comment type="domain">
    <text evidence="1 12">Death domain is responsible for interaction with RANBP9. It also mediates interaction with ARHGDIA and RIPK2 (By similarity).</text>
</comment>
<comment type="domain">
    <text evidence="12">The extracellular domain is responsible for interaction with NTRK1.</text>
</comment>
<comment type="PTM">
    <text evidence="18">Subject to intramembrane proteolytic cleavage by the gamma-secretase complex, giving rise to an intracellular fragment that is rapidly degraded via the proteasome.</text>
</comment>
<comment type="PTM">
    <text evidence="15">N- and O-glycosylated.</text>
</comment>
<comment type="PTM">
    <text>Phosphorylated on serine residues.</text>
</comment>
<organism>
    <name type="scientific">Rattus norvegicus</name>
    <name type="common">Rat</name>
    <dbReference type="NCBI Taxonomy" id="10116"/>
    <lineage>
        <taxon>Eukaryota</taxon>
        <taxon>Metazoa</taxon>
        <taxon>Chordata</taxon>
        <taxon>Craniata</taxon>
        <taxon>Vertebrata</taxon>
        <taxon>Euteleostomi</taxon>
        <taxon>Mammalia</taxon>
        <taxon>Eutheria</taxon>
        <taxon>Euarchontoglires</taxon>
        <taxon>Glires</taxon>
        <taxon>Rodentia</taxon>
        <taxon>Myomorpha</taxon>
        <taxon>Muroidea</taxon>
        <taxon>Muridae</taxon>
        <taxon>Murinae</taxon>
        <taxon>Rattus</taxon>
    </lineage>
</organism>
<feature type="signal peptide">
    <location>
        <begin position="1"/>
        <end position="29"/>
    </location>
</feature>
<feature type="chain" id="PRO_0000034593" description="Tumor necrosis factor receptor superfamily member 16">
    <location>
        <begin position="30"/>
        <end position="425"/>
    </location>
</feature>
<feature type="topological domain" description="Extracellular" evidence="22">
    <location>
        <begin position="30"/>
        <end position="253"/>
    </location>
</feature>
<feature type="transmembrane region" description="Helical" evidence="24">
    <location>
        <begin position="254"/>
        <end position="274"/>
    </location>
</feature>
<feature type="topological domain" description="Cytoplasmic" evidence="22">
    <location>
        <begin position="275"/>
        <end position="425"/>
    </location>
</feature>
<feature type="repeat" description="TNFR-Cys 1">
    <location>
        <begin position="32"/>
        <end position="65"/>
    </location>
</feature>
<feature type="repeat" description="TNFR-Cys 2">
    <location>
        <begin position="67"/>
        <end position="108"/>
    </location>
</feature>
<feature type="repeat" description="TNFR-Cys 3">
    <location>
        <begin position="109"/>
        <end position="147"/>
    </location>
</feature>
<feature type="repeat" description="TNFR-Cys 4">
    <location>
        <begin position="149"/>
        <end position="189"/>
    </location>
</feature>
<feature type="domain" description="Death" evidence="4">
    <location>
        <begin position="354"/>
        <end position="419"/>
    </location>
</feature>
<feature type="region of interest" description="Disordered" evidence="6">
    <location>
        <begin position="193"/>
        <end position="225"/>
    </location>
</feature>
<feature type="region of interest" description="Disordered" evidence="6">
    <location>
        <begin position="282"/>
        <end position="332"/>
    </location>
</feature>
<feature type="region of interest" description="Mediates interaction with KIDINS220">
    <location>
        <begin position="327"/>
        <end position="342"/>
    </location>
</feature>
<feature type="compositionally biased region" description="Polar residues" evidence="6">
    <location>
        <begin position="206"/>
        <end position="215"/>
    </location>
</feature>
<feature type="compositionally biased region" description="Polar residues" evidence="6">
    <location>
        <begin position="282"/>
        <end position="292"/>
    </location>
</feature>
<feature type="compositionally biased region" description="Polar residues" evidence="6">
    <location>
        <begin position="306"/>
        <end position="327"/>
    </location>
</feature>
<feature type="modified residue" description="Phosphoserine" evidence="1">
    <location>
        <position position="312"/>
    </location>
</feature>
<feature type="glycosylation site" description="N-linked (GlcNAc...) asparagine" evidence="23 29">
    <location>
        <position position="61"/>
    </location>
</feature>
<feature type="glycosylation site" description="N-linked (GlcNAc...) asparagine" evidence="3">
    <location>
        <position position="71"/>
    </location>
</feature>
<feature type="disulfide bond" evidence="5 26 29 30">
    <location>
        <begin position="33"/>
        <end position="44"/>
    </location>
</feature>
<feature type="disulfide bond" evidence="5 26 29 30">
    <location>
        <begin position="45"/>
        <end position="58"/>
    </location>
</feature>
<feature type="disulfide bond" evidence="5 26 29 30">
    <location>
        <begin position="48"/>
        <end position="65"/>
    </location>
</feature>
<feature type="disulfide bond" evidence="5 26 29 30">
    <location>
        <begin position="68"/>
        <end position="84"/>
    </location>
</feature>
<feature type="disulfide bond" evidence="5 26 29 30">
    <location>
        <begin position="87"/>
        <end position="100"/>
    </location>
</feature>
<feature type="disulfide bond" evidence="5 26 29 30">
    <location>
        <begin position="90"/>
        <end position="108"/>
    </location>
</feature>
<feature type="disulfide bond" evidence="5 26 29 30">
    <location>
        <begin position="110"/>
        <end position="123"/>
    </location>
</feature>
<feature type="disulfide bond" evidence="5 26 29 30">
    <location>
        <begin position="126"/>
        <end position="139"/>
    </location>
</feature>
<feature type="disulfide bond" evidence="5 26 29 30">
    <location>
        <begin position="129"/>
        <end position="147"/>
    </location>
</feature>
<feature type="disulfide bond" evidence="5 26 29 30">
    <location>
        <begin position="150"/>
        <end position="165"/>
    </location>
</feature>
<feature type="disulfide bond" evidence="5 26 29 30">
    <location>
        <begin position="168"/>
        <end position="181"/>
    </location>
</feature>
<feature type="disulfide bond" evidence="5 26 29 30">
    <location>
        <begin position="171"/>
        <end position="189"/>
    </location>
</feature>
<feature type="mutagenesis site" description="Loss of a glycosylation site." evidence="15">
    <original>N</original>
    <variation>D</variation>
    <location>
        <position position="61"/>
    </location>
</feature>
<feature type="mutagenesis site" description="Alters mode of dimerization, but does not abolish dimerization." evidence="18">
    <original>C</original>
    <variation>A</variation>
    <location>
        <position position="257"/>
    </location>
</feature>
<feature type="mutagenesis site" description="No effect on dimerization. Loss of dimerization; when associated with I-266." evidence="18">
    <original>C</original>
    <variation>I</variation>
    <location>
        <position position="257"/>
    </location>
</feature>
<feature type="mutagenesis site" description="No effect on dimerization." evidence="18">
    <original>A</original>
    <variation>I</variation>
    <location>
        <position position="262"/>
    </location>
</feature>
<feature type="mutagenesis site" description="No effect on dimerization. Loss of dimerization; when associated with I-257." evidence="18">
    <original>G</original>
    <variation>I</variation>
    <location>
        <position position="266"/>
    </location>
</feature>
<feature type="strand" evidence="33">
    <location>
        <begin position="40"/>
        <end position="45"/>
    </location>
</feature>
<feature type="strand" evidence="31">
    <location>
        <begin position="52"/>
        <end position="56"/>
    </location>
</feature>
<feature type="strand" evidence="31">
    <location>
        <begin position="58"/>
        <end position="62"/>
    </location>
</feature>
<feature type="strand" evidence="31">
    <location>
        <begin position="64"/>
        <end position="67"/>
    </location>
</feature>
<feature type="turn" evidence="31">
    <location>
        <begin position="70"/>
        <end position="72"/>
    </location>
</feature>
<feature type="strand" evidence="31">
    <location>
        <begin position="79"/>
        <end position="81"/>
    </location>
</feature>
<feature type="strand" evidence="31">
    <location>
        <begin position="94"/>
        <end position="98"/>
    </location>
</feature>
<feature type="strand" evidence="31">
    <location>
        <begin position="107"/>
        <end position="110"/>
    </location>
</feature>
<feature type="strand" evidence="31">
    <location>
        <begin position="114"/>
        <end position="116"/>
    </location>
</feature>
<feature type="turn" evidence="31">
    <location>
        <begin position="118"/>
        <end position="120"/>
    </location>
</feature>
<feature type="strand" evidence="31">
    <location>
        <begin position="123"/>
        <end position="125"/>
    </location>
</feature>
<feature type="strand" evidence="31">
    <location>
        <begin position="133"/>
        <end position="137"/>
    </location>
</feature>
<feature type="strand" evidence="31">
    <location>
        <begin position="146"/>
        <end position="149"/>
    </location>
</feature>
<feature type="strand" evidence="31">
    <location>
        <begin position="160"/>
        <end position="162"/>
    </location>
</feature>
<feature type="turn" evidence="32">
    <location>
        <begin position="246"/>
        <end position="249"/>
    </location>
</feature>
<feature type="strand" evidence="32">
    <location>
        <begin position="250"/>
        <end position="253"/>
    </location>
</feature>
<feature type="helix" evidence="32">
    <location>
        <begin position="255"/>
        <end position="275"/>
    </location>
</feature>
<feature type="turn" evidence="32">
    <location>
        <begin position="276"/>
        <end position="278"/>
    </location>
</feature>
<feature type="helix" evidence="34">
    <location>
        <begin position="337"/>
        <end position="339"/>
    </location>
</feature>
<feature type="helix" evidence="34">
    <location>
        <begin position="342"/>
        <end position="351"/>
    </location>
</feature>
<feature type="turn" evidence="34">
    <location>
        <begin position="352"/>
        <end position="355"/>
    </location>
</feature>
<feature type="helix" evidence="34">
    <location>
        <begin position="356"/>
        <end position="364"/>
    </location>
</feature>
<feature type="helix" evidence="34">
    <location>
        <begin position="368"/>
        <end position="373"/>
    </location>
</feature>
<feature type="helix" evidence="34">
    <location>
        <begin position="374"/>
        <end position="376"/>
    </location>
</feature>
<feature type="strand" evidence="34">
    <location>
        <begin position="377"/>
        <end position="379"/>
    </location>
</feature>
<feature type="helix" evidence="34">
    <location>
        <begin position="380"/>
        <end position="388"/>
    </location>
</feature>
<feature type="strand" evidence="35">
    <location>
        <begin position="391"/>
        <end position="393"/>
    </location>
</feature>
<feature type="helix" evidence="34">
    <location>
        <begin position="396"/>
        <end position="405"/>
    </location>
</feature>
<feature type="helix" evidence="34">
    <location>
        <begin position="409"/>
        <end position="416"/>
    </location>
</feature>
<dbReference type="EMBL" id="X05137">
    <property type="protein sequence ID" value="CAA28783.1"/>
    <property type="molecule type" value="mRNA"/>
</dbReference>
<dbReference type="EMBL" id="X61269">
    <property type="status" value="NOT_ANNOTATED_CDS"/>
    <property type="molecule type" value="Genomic_DNA"/>
</dbReference>
<dbReference type="PIR" id="A26431">
    <property type="entry name" value="A26431"/>
</dbReference>
<dbReference type="RefSeq" id="NP_036742.2">
    <property type="nucleotide sequence ID" value="NM_012610.2"/>
</dbReference>
<dbReference type="PDB" id="1NGR">
    <property type="method" value="NMR"/>
    <property type="chains" value="A=334-418"/>
</dbReference>
<dbReference type="PDB" id="1SG1">
    <property type="method" value="X-ray"/>
    <property type="resolution" value="2.40 A"/>
    <property type="chains" value="X=30-190"/>
</dbReference>
<dbReference type="PDB" id="2MIC">
    <property type="method" value="NMR"/>
    <property type="chains" value="A/B=245-284"/>
</dbReference>
<dbReference type="PDB" id="2MJO">
    <property type="method" value="NMR"/>
    <property type="chains" value="A/B=245-284"/>
</dbReference>
<dbReference type="PDB" id="3BUK">
    <property type="method" value="X-ray"/>
    <property type="resolution" value="2.60 A"/>
    <property type="chains" value="C/D=30-190"/>
</dbReference>
<dbReference type="PDB" id="3IJ2">
    <property type="method" value="X-ray"/>
    <property type="resolution" value="3.75 A"/>
    <property type="chains" value="X/Y=30-190"/>
</dbReference>
<dbReference type="PDB" id="4F42">
    <property type="method" value="X-ray"/>
    <property type="resolution" value="2.38 A"/>
    <property type="chains" value="A=334-418"/>
</dbReference>
<dbReference type="PDB" id="4F44">
    <property type="method" value="X-ray"/>
    <property type="resolution" value="2.40 A"/>
    <property type="chains" value="A/B=334-418"/>
</dbReference>
<dbReference type="PDBsum" id="1NGR"/>
<dbReference type="PDBsum" id="1SG1"/>
<dbReference type="PDBsum" id="2MIC"/>
<dbReference type="PDBsum" id="2MJO"/>
<dbReference type="PDBsum" id="3BUK"/>
<dbReference type="PDBsum" id="3IJ2"/>
<dbReference type="PDBsum" id="4F42"/>
<dbReference type="PDBsum" id="4F44"/>
<dbReference type="BMRB" id="P07174"/>
<dbReference type="SMR" id="P07174"/>
<dbReference type="BioGRID" id="246737">
    <property type="interactions" value="15"/>
</dbReference>
<dbReference type="CORUM" id="P07174"/>
<dbReference type="DIP" id="DIP-5715N"/>
<dbReference type="FunCoup" id="P07174">
    <property type="interactions" value="473"/>
</dbReference>
<dbReference type="IntAct" id="P07174">
    <property type="interactions" value="20"/>
</dbReference>
<dbReference type="MINT" id="P07174"/>
<dbReference type="STRING" id="10116.ENSRNOP00000007268"/>
<dbReference type="ChEMBL" id="CHEMBL4523169"/>
<dbReference type="GlyCosmos" id="P07174">
    <property type="glycosylation" value="2 sites, No reported glycans"/>
</dbReference>
<dbReference type="GlyGen" id="P07174">
    <property type="glycosylation" value="2 sites"/>
</dbReference>
<dbReference type="iPTMnet" id="P07174"/>
<dbReference type="PhosphoSitePlus" id="P07174"/>
<dbReference type="SwissPalm" id="P07174"/>
<dbReference type="jPOST" id="P07174"/>
<dbReference type="PaxDb" id="10116-ENSRNOP00000007268"/>
<dbReference type="GeneID" id="24596"/>
<dbReference type="KEGG" id="rno:24596"/>
<dbReference type="UCSC" id="RGD:3177">
    <property type="organism name" value="rat"/>
</dbReference>
<dbReference type="AGR" id="RGD:3177"/>
<dbReference type="CTD" id="4804"/>
<dbReference type="RGD" id="3177">
    <property type="gene designation" value="Ngfr"/>
</dbReference>
<dbReference type="eggNOG" id="ENOG502QWPN">
    <property type="taxonomic scope" value="Eukaryota"/>
</dbReference>
<dbReference type="InParanoid" id="P07174"/>
<dbReference type="OrthoDB" id="56724at9989"/>
<dbReference type="PhylomeDB" id="P07174"/>
<dbReference type="Reactome" id="R-RNO-193634">
    <property type="pathway name" value="Axonal growth inhibition (RHOA activation)"/>
</dbReference>
<dbReference type="Reactome" id="R-RNO-193692">
    <property type="pathway name" value="Regulated proteolysis of p75NTR"/>
</dbReference>
<dbReference type="Reactome" id="R-RNO-205017">
    <property type="pathway name" value="NFG and proNGF binds to p75NTR"/>
</dbReference>
<dbReference type="Reactome" id="R-RNO-205025">
    <property type="pathway name" value="NADE modulates death signalling"/>
</dbReference>
<dbReference type="Reactome" id="R-RNO-205043">
    <property type="pathway name" value="NRIF signals cell death from the nucleus"/>
</dbReference>
<dbReference type="Reactome" id="R-RNO-209543">
    <property type="pathway name" value="p75NTR recruits signalling complexes"/>
</dbReference>
<dbReference type="Reactome" id="R-RNO-209560">
    <property type="pathway name" value="NF-kB is activated and signals survival"/>
</dbReference>
<dbReference type="Reactome" id="R-RNO-209563">
    <property type="pathway name" value="Axonal growth stimulation"/>
</dbReference>
<dbReference type="EvolutionaryTrace" id="P07174"/>
<dbReference type="PRO" id="PR:P07174"/>
<dbReference type="Proteomes" id="UP000002494">
    <property type="component" value="Unplaced"/>
</dbReference>
<dbReference type="GO" id="GO:0009986">
    <property type="term" value="C:cell surface"/>
    <property type="evidence" value="ECO:0000266"/>
    <property type="project" value="RGD"/>
</dbReference>
<dbReference type="GO" id="GO:0005911">
    <property type="term" value="C:cell-cell junction"/>
    <property type="evidence" value="ECO:0000266"/>
    <property type="project" value="RGD"/>
</dbReference>
<dbReference type="GO" id="GO:0045334">
    <property type="term" value="C:clathrin-coated endocytic vesicle"/>
    <property type="evidence" value="ECO:0000314"/>
    <property type="project" value="RGD"/>
</dbReference>
<dbReference type="GO" id="GO:0005737">
    <property type="term" value="C:cytoplasm"/>
    <property type="evidence" value="ECO:0000266"/>
    <property type="project" value="RGD"/>
</dbReference>
<dbReference type="GO" id="GO:0032590">
    <property type="term" value="C:dendrite membrane"/>
    <property type="evidence" value="ECO:0000314"/>
    <property type="project" value="RGD"/>
</dbReference>
<dbReference type="GO" id="GO:0043197">
    <property type="term" value="C:dendritic spine"/>
    <property type="evidence" value="ECO:0007669"/>
    <property type="project" value="UniProtKB-SubCell"/>
</dbReference>
<dbReference type="GO" id="GO:0009897">
    <property type="term" value="C:external side of plasma membrane"/>
    <property type="evidence" value="ECO:0000314"/>
    <property type="project" value="RGD"/>
</dbReference>
<dbReference type="GO" id="GO:0030426">
    <property type="term" value="C:growth cone"/>
    <property type="evidence" value="ECO:0007669"/>
    <property type="project" value="UniProtKB-SubCell"/>
</dbReference>
<dbReference type="GO" id="GO:0005739">
    <property type="term" value="C:mitochondrion"/>
    <property type="evidence" value="ECO:0000314"/>
    <property type="project" value="RGD"/>
</dbReference>
<dbReference type="GO" id="GO:0031594">
    <property type="term" value="C:neuromuscular junction"/>
    <property type="evidence" value="ECO:0000314"/>
    <property type="project" value="SynGO"/>
</dbReference>
<dbReference type="GO" id="GO:0032809">
    <property type="term" value="C:neuronal cell body membrane"/>
    <property type="evidence" value="ECO:0000314"/>
    <property type="project" value="RGD"/>
</dbReference>
<dbReference type="GO" id="GO:0005635">
    <property type="term" value="C:nuclear envelope"/>
    <property type="evidence" value="ECO:0000314"/>
    <property type="project" value="RGD"/>
</dbReference>
<dbReference type="GO" id="GO:0043204">
    <property type="term" value="C:perikaryon"/>
    <property type="evidence" value="ECO:0000314"/>
    <property type="project" value="RGD"/>
</dbReference>
<dbReference type="GO" id="GO:0005886">
    <property type="term" value="C:plasma membrane"/>
    <property type="evidence" value="ECO:0000266"/>
    <property type="project" value="RGD"/>
</dbReference>
<dbReference type="GO" id="GO:0014069">
    <property type="term" value="C:postsynaptic density"/>
    <property type="evidence" value="ECO:0000266"/>
    <property type="project" value="RGD"/>
</dbReference>
<dbReference type="GO" id="GO:0042734">
    <property type="term" value="C:presynaptic membrane"/>
    <property type="evidence" value="ECO:0000314"/>
    <property type="project" value="SynGO"/>
</dbReference>
<dbReference type="GO" id="GO:0001540">
    <property type="term" value="F:amyloid-beta binding"/>
    <property type="evidence" value="ECO:0000353"/>
    <property type="project" value="RGD"/>
</dbReference>
<dbReference type="GO" id="GO:0005516">
    <property type="term" value="F:calmodulin binding"/>
    <property type="evidence" value="ECO:0000250"/>
    <property type="project" value="UniProtKB"/>
</dbReference>
<dbReference type="GO" id="GO:0015026">
    <property type="term" value="F:coreceptor activity"/>
    <property type="evidence" value="ECO:0000266"/>
    <property type="project" value="RGD"/>
</dbReference>
<dbReference type="GO" id="GO:0005035">
    <property type="term" value="F:death receptor activity"/>
    <property type="evidence" value="ECO:0000266"/>
    <property type="project" value="RGD"/>
</dbReference>
<dbReference type="GO" id="GO:0042802">
    <property type="term" value="F:identical protein binding"/>
    <property type="evidence" value="ECO:0000353"/>
    <property type="project" value="IntAct"/>
</dbReference>
<dbReference type="GO" id="GO:0048406">
    <property type="term" value="F:nerve growth factor binding"/>
    <property type="evidence" value="ECO:0000314"/>
    <property type="project" value="RGD"/>
</dbReference>
<dbReference type="GO" id="GO:0043121">
    <property type="term" value="F:neurotrophin binding"/>
    <property type="evidence" value="ECO:0000353"/>
    <property type="project" value="RGD"/>
</dbReference>
<dbReference type="GO" id="GO:0005168">
    <property type="term" value="F:neurotrophin TRKA receptor binding"/>
    <property type="evidence" value="ECO:0000353"/>
    <property type="project" value="RGD"/>
</dbReference>
<dbReference type="GO" id="GO:0070678">
    <property type="term" value="F:preprotein binding"/>
    <property type="evidence" value="ECO:0000353"/>
    <property type="project" value="RGD"/>
</dbReference>
<dbReference type="GO" id="GO:0044877">
    <property type="term" value="F:protein-containing complex binding"/>
    <property type="evidence" value="ECO:0000353"/>
    <property type="project" value="RGD"/>
</dbReference>
<dbReference type="GO" id="GO:0031267">
    <property type="term" value="F:small GTPase binding"/>
    <property type="evidence" value="ECO:0000250"/>
    <property type="project" value="UniProtKB"/>
</dbReference>
<dbReference type="GO" id="GO:0031625">
    <property type="term" value="F:ubiquitin protein ligase binding"/>
    <property type="evidence" value="ECO:0000266"/>
    <property type="project" value="RGD"/>
</dbReference>
<dbReference type="GO" id="GO:0007411">
    <property type="term" value="P:axon guidance"/>
    <property type="evidence" value="ECO:0000266"/>
    <property type="project" value="RGD"/>
</dbReference>
<dbReference type="GO" id="GO:1904646">
    <property type="term" value="P:cellular response to amyloid-beta"/>
    <property type="evidence" value="ECO:0000266"/>
    <property type="project" value="RGD"/>
</dbReference>
<dbReference type="GO" id="GO:0034599">
    <property type="term" value="P:cellular response to oxidative stress"/>
    <property type="evidence" value="ECO:0000315"/>
    <property type="project" value="RGD"/>
</dbReference>
<dbReference type="GO" id="GO:0007417">
    <property type="term" value="P:central nervous system development"/>
    <property type="evidence" value="ECO:0000266"/>
    <property type="project" value="RGD"/>
</dbReference>
<dbReference type="GO" id="GO:0032922">
    <property type="term" value="P:circadian regulation of gene expression"/>
    <property type="evidence" value="ECO:0000250"/>
    <property type="project" value="UniProtKB"/>
</dbReference>
<dbReference type="GO" id="GO:0007623">
    <property type="term" value="P:circadian rhythm"/>
    <property type="evidence" value="ECO:0000266"/>
    <property type="project" value="RGD"/>
</dbReference>
<dbReference type="GO" id="GO:0016048">
    <property type="term" value="P:detection of temperature stimulus"/>
    <property type="evidence" value="ECO:0000266"/>
    <property type="project" value="RGD"/>
</dbReference>
<dbReference type="GO" id="GO:0035907">
    <property type="term" value="P:dorsal aorta development"/>
    <property type="evidence" value="ECO:0000266"/>
    <property type="project" value="RGD"/>
</dbReference>
<dbReference type="GO" id="GO:0097191">
    <property type="term" value="P:extrinsic apoptotic signaling pathway"/>
    <property type="evidence" value="ECO:0000266"/>
    <property type="project" value="RGD"/>
</dbReference>
<dbReference type="GO" id="GO:0008543">
    <property type="term" value="P:fibroblast growth factor receptor signaling pathway"/>
    <property type="evidence" value="ECO:0000266"/>
    <property type="project" value="RGD"/>
</dbReference>
<dbReference type="GO" id="GO:0048144">
    <property type="term" value="P:fibroblast proliferation"/>
    <property type="evidence" value="ECO:0000266"/>
    <property type="project" value="RGD"/>
</dbReference>
<dbReference type="GO" id="GO:0042593">
    <property type="term" value="P:glucose homeostasis"/>
    <property type="evidence" value="ECO:0000250"/>
    <property type="project" value="UniProtKB"/>
</dbReference>
<dbReference type="GO" id="GO:0001942">
    <property type="term" value="P:hair follicle development"/>
    <property type="evidence" value="ECO:0000266"/>
    <property type="project" value="RGD"/>
</dbReference>
<dbReference type="GO" id="GO:0031069">
    <property type="term" value="P:hair follicle morphogenesis"/>
    <property type="evidence" value="ECO:0000266"/>
    <property type="project" value="RGD"/>
</dbReference>
<dbReference type="GO" id="GO:0001678">
    <property type="term" value="P:intracellular glucose homeostasis"/>
    <property type="evidence" value="ECO:0000250"/>
    <property type="project" value="UniProtKB"/>
</dbReference>
<dbReference type="GO" id="GO:0006886">
    <property type="term" value="P:intracellular protein transport"/>
    <property type="evidence" value="ECO:0000250"/>
    <property type="project" value="UniProtKB"/>
</dbReference>
<dbReference type="GO" id="GO:0016525">
    <property type="term" value="P:negative regulation of angiogenesis"/>
    <property type="evidence" value="ECO:0000315"/>
    <property type="project" value="RGD"/>
</dbReference>
<dbReference type="GO" id="GO:0043066">
    <property type="term" value="P:negative regulation of apoptotic process"/>
    <property type="evidence" value="ECO:0000315"/>
    <property type="project" value="RGD"/>
</dbReference>
<dbReference type="GO" id="GO:1903588">
    <property type="term" value="P:negative regulation of blood vessel endothelial cell proliferation involved in sprouting angiogenesis"/>
    <property type="evidence" value="ECO:0000266"/>
    <property type="project" value="RGD"/>
</dbReference>
<dbReference type="GO" id="GO:0030336">
    <property type="term" value="P:negative regulation of cell migration"/>
    <property type="evidence" value="ECO:0000266"/>
    <property type="project" value="RGD"/>
</dbReference>
<dbReference type="GO" id="GO:0061000">
    <property type="term" value="P:negative regulation of dendritic spine development"/>
    <property type="evidence" value="ECO:0000315"/>
    <property type="project" value="RGD"/>
</dbReference>
<dbReference type="GO" id="GO:0040037">
    <property type="term" value="P:negative regulation of fibroblast growth factor receptor signaling pathway"/>
    <property type="evidence" value="ECO:0000266"/>
    <property type="project" value="RGD"/>
</dbReference>
<dbReference type="GO" id="GO:0051799">
    <property type="term" value="P:negative regulation of hair follicle development"/>
    <property type="evidence" value="ECO:0000266"/>
    <property type="project" value="RGD"/>
</dbReference>
<dbReference type="GO" id="GO:0051902">
    <property type="term" value="P:negative regulation of mitochondrial depolarization"/>
    <property type="evidence" value="ECO:0000315"/>
    <property type="project" value="RGD"/>
</dbReference>
<dbReference type="GO" id="GO:0043524">
    <property type="term" value="P:negative regulation of neuron apoptotic process"/>
    <property type="evidence" value="ECO:0000315"/>
    <property type="project" value="RGD"/>
</dbReference>
<dbReference type="GO" id="GO:0010977">
    <property type="term" value="P:negative regulation of neuron projection development"/>
    <property type="evidence" value="ECO:0000314"/>
    <property type="project" value="RGD"/>
</dbReference>
<dbReference type="GO" id="GO:0021675">
    <property type="term" value="P:nerve development"/>
    <property type="evidence" value="ECO:0000266"/>
    <property type="project" value="RGD"/>
</dbReference>
<dbReference type="GO" id="GO:0051402">
    <property type="term" value="P:neuron apoptotic process"/>
    <property type="evidence" value="ECO:0000266"/>
    <property type="project" value="RGD"/>
</dbReference>
<dbReference type="GO" id="GO:0042475">
    <property type="term" value="P:odontogenesis of dentin-containing tooth"/>
    <property type="evidence" value="ECO:0000266"/>
    <property type="project" value="RGD"/>
</dbReference>
<dbReference type="GO" id="GO:0043065">
    <property type="term" value="P:positive regulation of apoptotic process"/>
    <property type="evidence" value="ECO:0000315"/>
    <property type="project" value="RGD"/>
</dbReference>
<dbReference type="GO" id="GO:2001235">
    <property type="term" value="P:positive regulation of apoptotic signaling pathway"/>
    <property type="evidence" value="ECO:0000266"/>
    <property type="project" value="RGD"/>
</dbReference>
<dbReference type="GO" id="GO:2000353">
    <property type="term" value="P:positive regulation of endothelial cell apoptotic process"/>
    <property type="evidence" value="ECO:0000266"/>
    <property type="project" value="RGD"/>
</dbReference>
<dbReference type="GO" id="GO:2000463">
    <property type="term" value="P:positive regulation of excitatory postsynaptic potential"/>
    <property type="evidence" value="ECO:0000315"/>
    <property type="project" value="RGD"/>
</dbReference>
<dbReference type="GO" id="GO:0048146">
    <property type="term" value="P:positive regulation of fibroblast proliferation"/>
    <property type="evidence" value="ECO:0000266"/>
    <property type="project" value="RGD"/>
</dbReference>
<dbReference type="GO" id="GO:0043410">
    <property type="term" value="P:positive regulation of MAPK cascade"/>
    <property type="evidence" value="ECO:0000314"/>
    <property type="project" value="RGD"/>
</dbReference>
<dbReference type="GO" id="GO:1902895">
    <property type="term" value="P:positive regulation of miRNA transcription"/>
    <property type="evidence" value="ECO:0000266"/>
    <property type="project" value="RGD"/>
</dbReference>
<dbReference type="GO" id="GO:0031643">
    <property type="term" value="P:positive regulation of myelination"/>
    <property type="evidence" value="ECO:0000315"/>
    <property type="project" value="RGD"/>
</dbReference>
<dbReference type="GO" id="GO:2000179">
    <property type="term" value="P:positive regulation of neural precursor cell proliferation"/>
    <property type="evidence" value="ECO:0000315"/>
    <property type="project" value="RGD"/>
</dbReference>
<dbReference type="GO" id="GO:0045666">
    <property type="term" value="P:positive regulation of neuron differentiation"/>
    <property type="evidence" value="ECO:0000314"/>
    <property type="project" value="RGD"/>
</dbReference>
<dbReference type="GO" id="GO:0010976">
    <property type="term" value="P:positive regulation of neuron projection development"/>
    <property type="evidence" value="ECO:0000315"/>
    <property type="project" value="RGD"/>
</dbReference>
<dbReference type="GO" id="GO:0042488">
    <property type="term" value="P:positive regulation of odontogenesis of dentin-containing tooth"/>
    <property type="evidence" value="ECO:0000266"/>
    <property type="project" value="RGD"/>
</dbReference>
<dbReference type="GO" id="GO:0051897">
    <property type="term" value="P:positive regulation of phosphatidylinositol 3-kinase/protein kinase B signal transduction"/>
    <property type="evidence" value="ECO:0000314"/>
    <property type="project" value="RGD"/>
</dbReference>
<dbReference type="GO" id="GO:1900182">
    <property type="term" value="P:positive regulation of protein localization to nucleus"/>
    <property type="evidence" value="ECO:0000266"/>
    <property type="project" value="RGD"/>
</dbReference>
<dbReference type="GO" id="GO:0035025">
    <property type="term" value="P:positive regulation of Rho protein signal transduction"/>
    <property type="evidence" value="ECO:0000314"/>
    <property type="project" value="RGD"/>
</dbReference>
<dbReference type="GO" id="GO:0032224">
    <property type="term" value="P:positive regulation of synaptic transmission, cholinergic"/>
    <property type="evidence" value="ECO:0000315"/>
    <property type="project" value="RGD"/>
</dbReference>
<dbReference type="GO" id="GO:0051968">
    <property type="term" value="P:positive regulation of synaptic transmission, glutamatergic"/>
    <property type="evidence" value="ECO:0000315"/>
    <property type="project" value="RGD"/>
</dbReference>
<dbReference type="GO" id="GO:0099171">
    <property type="term" value="P:presynaptic modulation of chemical synaptic transmission"/>
    <property type="evidence" value="ECO:0000266"/>
    <property type="project" value="RGD"/>
</dbReference>
<dbReference type="GO" id="GO:0010468">
    <property type="term" value="P:regulation of gene expression"/>
    <property type="evidence" value="ECO:0000266"/>
    <property type="project" value="RGD"/>
</dbReference>
<dbReference type="GO" id="GO:2000377">
    <property type="term" value="P:regulation of reactive oxygen species metabolic process"/>
    <property type="evidence" value="ECO:0000315"/>
    <property type="project" value="RGD"/>
</dbReference>
<dbReference type="GO" id="GO:0045471">
    <property type="term" value="P:response to ethanol"/>
    <property type="evidence" value="ECO:0000270"/>
    <property type="project" value="RGD"/>
</dbReference>
<dbReference type="GO" id="GO:0032496">
    <property type="term" value="P:response to lipopolysaccharide"/>
    <property type="evidence" value="ECO:0000270"/>
    <property type="project" value="RGD"/>
</dbReference>
<dbReference type="GO" id="GO:0007266">
    <property type="term" value="P:Rho protein signal transduction"/>
    <property type="evidence" value="ECO:0000266"/>
    <property type="project" value="RGD"/>
</dbReference>
<dbReference type="GO" id="GO:0035914">
    <property type="term" value="P:skeletal muscle cell differentiation"/>
    <property type="evidence" value="ECO:0000270"/>
    <property type="project" value="RGD"/>
</dbReference>
<dbReference type="GO" id="GO:0043588">
    <property type="term" value="P:skin development"/>
    <property type="evidence" value="ECO:0000266"/>
    <property type="project" value="RGD"/>
</dbReference>
<dbReference type="GO" id="GO:0007283">
    <property type="term" value="P:spermatogenesis"/>
    <property type="evidence" value="ECO:0000270"/>
    <property type="project" value="RGD"/>
</dbReference>
<dbReference type="CDD" id="cd08311">
    <property type="entry name" value="Death_p75NR"/>
    <property type="match status" value="1"/>
</dbReference>
<dbReference type="CDD" id="cd13416">
    <property type="entry name" value="TNFRSF16"/>
    <property type="match status" value="1"/>
</dbReference>
<dbReference type="FunFam" id="2.10.50.10:FF:000013">
    <property type="entry name" value="Tumor necrosis factor receptor superfamily member 16"/>
    <property type="match status" value="1"/>
</dbReference>
<dbReference type="FunFam" id="1.10.533.10:FF:000034">
    <property type="entry name" value="tumor necrosis factor receptor superfamily member 16"/>
    <property type="match status" value="1"/>
</dbReference>
<dbReference type="FunFam" id="2.10.50.10:FF:000012">
    <property type="entry name" value="tumor necrosis factor receptor superfamily member 16"/>
    <property type="match status" value="1"/>
</dbReference>
<dbReference type="FunFam" id="2.10.50.10:FF:000027">
    <property type="entry name" value="tumor necrosis factor receptor superfamily member 16"/>
    <property type="match status" value="1"/>
</dbReference>
<dbReference type="Gene3D" id="6.10.250.1780">
    <property type="match status" value="1"/>
</dbReference>
<dbReference type="Gene3D" id="1.10.533.10">
    <property type="entry name" value="Death Domain, Fas"/>
    <property type="match status" value="1"/>
</dbReference>
<dbReference type="Gene3D" id="2.10.50.10">
    <property type="entry name" value="Tumor Necrosis Factor Receptor, subunit A, domain 2"/>
    <property type="match status" value="4"/>
</dbReference>
<dbReference type="InterPro" id="IPR011029">
    <property type="entry name" value="DEATH-like_dom_sf"/>
</dbReference>
<dbReference type="InterPro" id="IPR000488">
    <property type="entry name" value="Death_dom"/>
</dbReference>
<dbReference type="InterPro" id="IPR052302">
    <property type="entry name" value="Neurotrophin_rcpt-DD"/>
</dbReference>
<dbReference type="InterPro" id="IPR001368">
    <property type="entry name" value="TNFR/NGFR_Cys_rich_reg"/>
</dbReference>
<dbReference type="InterPro" id="IPR041448">
    <property type="entry name" value="TNFR16_TM"/>
</dbReference>
<dbReference type="InterPro" id="IPR022325">
    <property type="entry name" value="TNFR_16"/>
</dbReference>
<dbReference type="InterPro" id="IPR034046">
    <property type="entry name" value="TNFRSF16_N"/>
</dbReference>
<dbReference type="PANTHER" id="PTHR46605">
    <property type="entry name" value="TUMOR NECROSIS FACTOR RECEPTOR"/>
    <property type="match status" value="1"/>
</dbReference>
<dbReference type="PANTHER" id="PTHR46605:SF3">
    <property type="entry name" value="TUMOR NECROSIS FACTOR RECEPTOR SUPERFAMILY MEMBER 16"/>
    <property type="match status" value="1"/>
</dbReference>
<dbReference type="Pfam" id="PF00531">
    <property type="entry name" value="Death"/>
    <property type="match status" value="1"/>
</dbReference>
<dbReference type="Pfam" id="PF18422">
    <property type="entry name" value="TNFR_16_TM"/>
    <property type="match status" value="1"/>
</dbReference>
<dbReference type="Pfam" id="PF00020">
    <property type="entry name" value="TNFR_c6"/>
    <property type="match status" value="3"/>
</dbReference>
<dbReference type="PRINTS" id="PR01966">
    <property type="entry name" value="TNFACTORR16"/>
</dbReference>
<dbReference type="SMART" id="SM00005">
    <property type="entry name" value="DEATH"/>
    <property type="match status" value="1"/>
</dbReference>
<dbReference type="SMART" id="SM00208">
    <property type="entry name" value="TNFR"/>
    <property type="match status" value="4"/>
</dbReference>
<dbReference type="SUPFAM" id="SSF47986">
    <property type="entry name" value="DEATH domain"/>
    <property type="match status" value="1"/>
</dbReference>
<dbReference type="SUPFAM" id="SSF57586">
    <property type="entry name" value="TNF receptor-like"/>
    <property type="match status" value="4"/>
</dbReference>
<dbReference type="PROSITE" id="PS50017">
    <property type="entry name" value="DEATH_DOMAIN"/>
    <property type="match status" value="1"/>
</dbReference>
<dbReference type="PROSITE" id="PS00652">
    <property type="entry name" value="TNFR_NGFR_1"/>
    <property type="match status" value="3"/>
</dbReference>
<dbReference type="PROSITE" id="PS50050">
    <property type="entry name" value="TNFR_NGFR_2"/>
    <property type="match status" value="4"/>
</dbReference>
<name>TNR16_RAT</name>
<evidence type="ECO:0000250" key="1">
    <source>
        <dbReference type="UniProtKB" id="P08138"/>
    </source>
</evidence>
<evidence type="ECO:0000250" key="2">
    <source>
        <dbReference type="UniProtKB" id="Q9Z0W1"/>
    </source>
</evidence>
<evidence type="ECO:0000255" key="3"/>
<evidence type="ECO:0000255" key="4">
    <source>
        <dbReference type="PROSITE-ProRule" id="PRU00064"/>
    </source>
</evidence>
<evidence type="ECO:0000255" key="5">
    <source>
        <dbReference type="PROSITE-ProRule" id="PRU00206"/>
    </source>
</evidence>
<evidence type="ECO:0000256" key="6">
    <source>
        <dbReference type="SAM" id="MobiDB-lite"/>
    </source>
</evidence>
<evidence type="ECO:0000269" key="7">
    <source>
    </source>
</evidence>
<evidence type="ECO:0000269" key="8">
    <source>
    </source>
</evidence>
<evidence type="ECO:0000269" key="9">
    <source>
    </source>
</evidence>
<evidence type="ECO:0000269" key="10">
    <source>
    </source>
</evidence>
<evidence type="ECO:0000269" key="11">
    <source>
    </source>
</evidence>
<evidence type="ECO:0000269" key="12">
    <source>
    </source>
</evidence>
<evidence type="ECO:0000269" key="13">
    <source>
    </source>
</evidence>
<evidence type="ECO:0000269" key="14">
    <source>
    </source>
</evidence>
<evidence type="ECO:0000269" key="15">
    <source>
    </source>
</evidence>
<evidence type="ECO:0000269" key="16">
    <source>
    </source>
</evidence>
<evidence type="ECO:0000269" key="17">
    <source>
    </source>
</evidence>
<evidence type="ECO:0000269" key="18">
    <source>
    </source>
</evidence>
<evidence type="ECO:0000269" key="19">
    <source>
    </source>
</evidence>
<evidence type="ECO:0000269" key="20">
    <source>
    </source>
</evidence>
<evidence type="ECO:0000269" key="21">
    <source>
    </source>
</evidence>
<evidence type="ECO:0000305" key="22"/>
<evidence type="ECO:0000305" key="23">
    <source>
    </source>
</evidence>
<evidence type="ECO:0000305" key="24">
    <source>
    </source>
</evidence>
<evidence type="ECO:0007744" key="25">
    <source>
        <dbReference type="PDB" id="1NGR"/>
    </source>
</evidence>
<evidence type="ECO:0007744" key="26">
    <source>
        <dbReference type="PDB" id="1SG1"/>
    </source>
</evidence>
<evidence type="ECO:0007744" key="27">
    <source>
        <dbReference type="PDB" id="2MIC"/>
    </source>
</evidence>
<evidence type="ECO:0007744" key="28">
    <source>
        <dbReference type="PDB" id="2MJO"/>
    </source>
</evidence>
<evidence type="ECO:0007744" key="29">
    <source>
        <dbReference type="PDB" id="3BUK"/>
    </source>
</evidence>
<evidence type="ECO:0007744" key="30">
    <source>
        <dbReference type="PDB" id="3IJ2"/>
    </source>
</evidence>
<evidence type="ECO:0007829" key="31">
    <source>
        <dbReference type="PDB" id="1SG1"/>
    </source>
</evidence>
<evidence type="ECO:0007829" key="32">
    <source>
        <dbReference type="PDB" id="2MIC"/>
    </source>
</evidence>
<evidence type="ECO:0007829" key="33">
    <source>
        <dbReference type="PDB" id="3BUK"/>
    </source>
</evidence>
<evidence type="ECO:0007829" key="34">
    <source>
        <dbReference type="PDB" id="4F42"/>
    </source>
</evidence>
<evidence type="ECO:0007829" key="35">
    <source>
        <dbReference type="PDB" id="4F44"/>
    </source>
</evidence>
<keyword id="KW-0002">3D-structure</keyword>
<keyword id="KW-0053">Apoptosis</keyword>
<keyword id="KW-0090">Biological rhythms</keyword>
<keyword id="KW-1003">Cell membrane</keyword>
<keyword id="KW-0966">Cell projection</keyword>
<keyword id="KW-0963">Cytoplasm</keyword>
<keyword id="KW-0217">Developmental protein</keyword>
<keyword id="KW-0221">Differentiation</keyword>
<keyword id="KW-1015">Disulfide bond</keyword>
<keyword id="KW-0325">Glycoprotein</keyword>
<keyword id="KW-0472">Membrane</keyword>
<keyword id="KW-0524">Neurogenesis</keyword>
<keyword id="KW-0597">Phosphoprotein</keyword>
<keyword id="KW-0675">Receptor</keyword>
<keyword id="KW-1185">Reference proteome</keyword>
<keyword id="KW-0677">Repeat</keyword>
<keyword id="KW-0732">Signal</keyword>
<keyword id="KW-0770">Synapse</keyword>
<keyword id="KW-0812">Transmembrane</keyword>
<keyword id="KW-1133">Transmembrane helix</keyword>
<accession>P07174</accession>